<protein>
    <recommendedName>
        <fullName>D-arabinono-1,4-lactone oxidase</fullName>
        <shortName>ALO</shortName>
        <ecNumber>1.1.3.37</ecNumber>
    </recommendedName>
    <alternativeName>
        <fullName>L-galactono-gamma-lactone oxidase</fullName>
    </alternativeName>
</protein>
<sequence length="525" mass="59206">MSFDLVAGNARSNFVFKNWAGIYSCRPQLYFQPNSIDEVVQIVKAAIEQGKTIVTVGSGHSPSDMCVTDQWLMNLDNLNSVVEFKENKEELYADVTVEAGLRIYQLSEILAEKGYAIQNLGSISEQSVAGIISTGTHGSSPYHGLVSSQYVNLTIVNGKGEVVFLDSENSPEVFRAATLSLGKIGIIVKATIRVIPEFNIKSTQEVIHFETLLNNWETIWTSSEFIRCWWYPYTRKVVLWRGSKTEEPLTAPRKSWWGSTFGRFIYESLIWISVKIYPALTPYVESFVFHQQYGRVETYGSGDVSVQTSIAGLNMDCLFSQFVDEWGCPLNNGPEVLRSLDYSITQAAQNKEFFVHVPVEVRCSNTTLPAEIPDYSNRTKTSAGPVFGNTLRPYLDATPRHLRYAPLSDVTNSQLSLYINATIYRPFGSNSPIHKWFTLFEDTMGAAGGKPHWAKNFLGATSMAAGKVKDEKDYDDYEMRGMATKIKEWYGEDLLKFREIRSQQDPNNVFMANKEWAIRNGIIEP</sequence>
<proteinExistence type="inferred from homology"/>
<keyword id="KW-0274">FAD</keyword>
<keyword id="KW-0285">Flavoprotein</keyword>
<keyword id="KW-0472">Membrane</keyword>
<keyword id="KW-0496">Mitochondrion</keyword>
<keyword id="KW-0560">Oxidoreductase</keyword>
<keyword id="KW-1185">Reference proteome</keyword>
<name>ALO_KLULA</name>
<dbReference type="EC" id="1.1.3.37"/>
<dbReference type="EMBL" id="CR382123">
    <property type="protein sequence ID" value="CAH01807.1"/>
    <property type="molecule type" value="Genomic_DNA"/>
</dbReference>
<dbReference type="RefSeq" id="XP_452956.1">
    <property type="nucleotide sequence ID" value="XM_452956.1"/>
</dbReference>
<dbReference type="SMR" id="Q6CSY3"/>
<dbReference type="FunCoup" id="Q6CSY3">
    <property type="interactions" value="99"/>
</dbReference>
<dbReference type="STRING" id="284590.Q6CSY3"/>
<dbReference type="PaxDb" id="284590-Q6CSY3"/>
<dbReference type="KEGG" id="kla:KLLA0_C16896g"/>
<dbReference type="eggNOG" id="KOG4730">
    <property type="taxonomic scope" value="Eukaryota"/>
</dbReference>
<dbReference type="HOGENOM" id="CLU_003896_4_1_1"/>
<dbReference type="InParanoid" id="Q6CSY3"/>
<dbReference type="OMA" id="YPRFGEF"/>
<dbReference type="UniPathway" id="UPA00771">
    <property type="reaction ID" value="UER00766"/>
</dbReference>
<dbReference type="Proteomes" id="UP000000598">
    <property type="component" value="Chromosome C"/>
</dbReference>
<dbReference type="GO" id="GO:0031966">
    <property type="term" value="C:mitochondrial membrane"/>
    <property type="evidence" value="ECO:0007669"/>
    <property type="project" value="UniProtKB-SubCell"/>
</dbReference>
<dbReference type="GO" id="GO:0003885">
    <property type="term" value="F:D-arabinono-1,4-lactone oxidase activity"/>
    <property type="evidence" value="ECO:0007669"/>
    <property type="project" value="UniProtKB-EC"/>
</dbReference>
<dbReference type="GO" id="GO:0071949">
    <property type="term" value="F:FAD binding"/>
    <property type="evidence" value="ECO:0007669"/>
    <property type="project" value="InterPro"/>
</dbReference>
<dbReference type="FunFam" id="3.30.465.10:FF:000042">
    <property type="entry name" value="D-arabinono-1,4-lactone oxidase"/>
    <property type="match status" value="1"/>
</dbReference>
<dbReference type="Gene3D" id="3.30.465.10">
    <property type="match status" value="1"/>
</dbReference>
<dbReference type="Gene3D" id="3.30.43.10">
    <property type="entry name" value="Uridine Diphospho-n-acetylenolpyruvylglucosamine Reductase, domain 2"/>
    <property type="match status" value="1"/>
</dbReference>
<dbReference type="InterPro" id="IPR007173">
    <property type="entry name" value="ALO_C"/>
</dbReference>
<dbReference type="InterPro" id="IPR016166">
    <property type="entry name" value="FAD-bd_PCMH"/>
</dbReference>
<dbReference type="InterPro" id="IPR036318">
    <property type="entry name" value="FAD-bd_PCMH-like_sf"/>
</dbReference>
<dbReference type="InterPro" id="IPR016167">
    <property type="entry name" value="FAD-bd_PCMH_sub1"/>
</dbReference>
<dbReference type="InterPro" id="IPR016169">
    <property type="entry name" value="FAD-bd_PCMH_sub2"/>
</dbReference>
<dbReference type="InterPro" id="IPR010031">
    <property type="entry name" value="FAD_lactone_oxidase-like"/>
</dbReference>
<dbReference type="InterPro" id="IPR006094">
    <property type="entry name" value="Oxid_FAD_bind_N"/>
</dbReference>
<dbReference type="InterPro" id="IPR006093">
    <property type="entry name" value="Oxy_OxRdtase_FAD_BS"/>
</dbReference>
<dbReference type="InterPro" id="IPR030654">
    <property type="entry name" value="Sugar_lactone_oxidase"/>
</dbReference>
<dbReference type="NCBIfam" id="TIGR01678">
    <property type="entry name" value="FAD_lactone_ox"/>
    <property type="match status" value="1"/>
</dbReference>
<dbReference type="PANTHER" id="PTHR43762:SF1">
    <property type="entry name" value="D-ARABINONO-1,4-LACTONE OXIDASE"/>
    <property type="match status" value="1"/>
</dbReference>
<dbReference type="PANTHER" id="PTHR43762">
    <property type="entry name" value="L-GULONOLACTONE OXIDASE"/>
    <property type="match status" value="1"/>
</dbReference>
<dbReference type="Pfam" id="PF04030">
    <property type="entry name" value="ALO"/>
    <property type="match status" value="1"/>
</dbReference>
<dbReference type="Pfam" id="PF01565">
    <property type="entry name" value="FAD_binding_4"/>
    <property type="match status" value="1"/>
</dbReference>
<dbReference type="PIRSF" id="PIRSF000136">
    <property type="entry name" value="LGO_GLO"/>
    <property type="match status" value="1"/>
</dbReference>
<dbReference type="SUPFAM" id="SSF56176">
    <property type="entry name" value="FAD-binding/transporter-associated domain-like"/>
    <property type="match status" value="1"/>
</dbReference>
<dbReference type="PROSITE" id="PS51387">
    <property type="entry name" value="FAD_PCMH"/>
    <property type="match status" value="1"/>
</dbReference>
<dbReference type="PROSITE" id="PS00862">
    <property type="entry name" value="OX2_COVAL_FAD"/>
    <property type="match status" value="1"/>
</dbReference>
<organism>
    <name type="scientific">Kluyveromyces lactis (strain ATCC 8585 / CBS 2359 / DSM 70799 / NBRC 1267 / NRRL Y-1140 / WM37)</name>
    <name type="common">Yeast</name>
    <name type="synonym">Candida sphaerica</name>
    <dbReference type="NCBI Taxonomy" id="284590"/>
    <lineage>
        <taxon>Eukaryota</taxon>
        <taxon>Fungi</taxon>
        <taxon>Dikarya</taxon>
        <taxon>Ascomycota</taxon>
        <taxon>Saccharomycotina</taxon>
        <taxon>Saccharomycetes</taxon>
        <taxon>Saccharomycetales</taxon>
        <taxon>Saccharomycetaceae</taxon>
        <taxon>Kluyveromyces</taxon>
    </lineage>
</organism>
<accession>Q6CSY3</accession>
<comment type="catalytic activity">
    <reaction>
        <text>D-arabinono-1,4-lactone + O2 = dehydro-D-arabinono-1,4-lactone + H2O2 + H(+)</text>
        <dbReference type="Rhea" id="RHEA:23756"/>
        <dbReference type="ChEBI" id="CHEBI:15378"/>
        <dbReference type="ChEBI" id="CHEBI:15379"/>
        <dbReference type="ChEBI" id="CHEBI:16240"/>
        <dbReference type="ChEBI" id="CHEBI:16292"/>
        <dbReference type="ChEBI" id="CHEBI:58277"/>
        <dbReference type="EC" id="1.1.3.37"/>
    </reaction>
</comment>
<comment type="cofactor">
    <cofactor evidence="1">
        <name>FAD</name>
        <dbReference type="ChEBI" id="CHEBI:57692"/>
    </cofactor>
</comment>
<comment type="pathway">
    <text>Cofactor biosynthesis; D-erythroascorbate biosynthesis; dehydro-D-arabinono-1,4-lactone from D-arabinose: step 2/2.</text>
</comment>
<comment type="subcellular location">
    <subcellularLocation>
        <location evidence="1">Mitochondrion membrane</location>
    </subcellularLocation>
    <text evidence="1">Membrane-embedded.</text>
</comment>
<comment type="similarity">
    <text evidence="3">Belongs to the oxygen-dependent FAD-linked oxidoreductase family.</text>
</comment>
<evidence type="ECO:0000250" key="1"/>
<evidence type="ECO:0000255" key="2">
    <source>
        <dbReference type="PROSITE-ProRule" id="PRU00718"/>
    </source>
</evidence>
<evidence type="ECO:0000305" key="3"/>
<feature type="chain" id="PRO_0000128167" description="D-arabinono-1,4-lactone oxidase">
    <location>
        <begin position="1"/>
        <end position="525"/>
    </location>
</feature>
<feature type="domain" description="FAD-binding PCMH-type" evidence="2">
    <location>
        <begin position="23"/>
        <end position="197"/>
    </location>
</feature>
<feature type="modified residue" description="Pros-8alpha-FAD histidine" evidence="1">
    <location>
        <position position="60"/>
    </location>
</feature>
<gene>
    <name type="primary">ALO1</name>
    <name type="ordered locus">KLLA0C16896g</name>
</gene>
<reference key="1">
    <citation type="journal article" date="2004" name="Nature">
        <title>Genome evolution in yeasts.</title>
        <authorList>
            <person name="Dujon B."/>
            <person name="Sherman D."/>
            <person name="Fischer G."/>
            <person name="Durrens P."/>
            <person name="Casaregola S."/>
            <person name="Lafontaine I."/>
            <person name="de Montigny J."/>
            <person name="Marck C."/>
            <person name="Neuveglise C."/>
            <person name="Talla E."/>
            <person name="Goffard N."/>
            <person name="Frangeul L."/>
            <person name="Aigle M."/>
            <person name="Anthouard V."/>
            <person name="Babour A."/>
            <person name="Barbe V."/>
            <person name="Barnay S."/>
            <person name="Blanchin S."/>
            <person name="Beckerich J.-M."/>
            <person name="Beyne E."/>
            <person name="Bleykasten C."/>
            <person name="Boisrame A."/>
            <person name="Boyer J."/>
            <person name="Cattolico L."/>
            <person name="Confanioleri F."/>
            <person name="de Daruvar A."/>
            <person name="Despons L."/>
            <person name="Fabre E."/>
            <person name="Fairhead C."/>
            <person name="Ferry-Dumazet H."/>
            <person name="Groppi A."/>
            <person name="Hantraye F."/>
            <person name="Hennequin C."/>
            <person name="Jauniaux N."/>
            <person name="Joyet P."/>
            <person name="Kachouri R."/>
            <person name="Kerrest A."/>
            <person name="Koszul R."/>
            <person name="Lemaire M."/>
            <person name="Lesur I."/>
            <person name="Ma L."/>
            <person name="Muller H."/>
            <person name="Nicaud J.-M."/>
            <person name="Nikolski M."/>
            <person name="Oztas S."/>
            <person name="Ozier-Kalogeropoulos O."/>
            <person name="Pellenz S."/>
            <person name="Potier S."/>
            <person name="Richard G.-F."/>
            <person name="Straub M.-L."/>
            <person name="Suleau A."/>
            <person name="Swennen D."/>
            <person name="Tekaia F."/>
            <person name="Wesolowski-Louvel M."/>
            <person name="Westhof E."/>
            <person name="Wirth B."/>
            <person name="Zeniou-Meyer M."/>
            <person name="Zivanovic Y."/>
            <person name="Bolotin-Fukuhara M."/>
            <person name="Thierry A."/>
            <person name="Bouchier C."/>
            <person name="Caudron B."/>
            <person name="Scarpelli C."/>
            <person name="Gaillardin C."/>
            <person name="Weissenbach J."/>
            <person name="Wincker P."/>
            <person name="Souciet J.-L."/>
        </authorList>
    </citation>
    <scope>NUCLEOTIDE SEQUENCE [LARGE SCALE GENOMIC DNA]</scope>
    <source>
        <strain>ATCC 8585 / CBS 2359 / DSM 70799 / NBRC 1267 / NRRL Y-1140 / WM37</strain>
    </source>
</reference>